<dbReference type="EMBL" id="CP001217">
    <property type="protein sequence ID" value="ACJ08695.1"/>
    <property type="molecule type" value="Genomic_DNA"/>
</dbReference>
<dbReference type="SMR" id="B6JP67"/>
<dbReference type="KEGG" id="hpp:HPP12_1549"/>
<dbReference type="HOGENOM" id="CLU_147249_3_1_7"/>
<dbReference type="Proteomes" id="UP000008198">
    <property type="component" value="Chromosome"/>
</dbReference>
<dbReference type="GO" id="GO:0009425">
    <property type="term" value="C:bacterial-type flagellum basal body"/>
    <property type="evidence" value="ECO:0007669"/>
    <property type="project" value="UniProtKB-SubCell"/>
</dbReference>
<dbReference type="GO" id="GO:0003774">
    <property type="term" value="F:cytoskeletal motor activity"/>
    <property type="evidence" value="ECO:0007669"/>
    <property type="project" value="InterPro"/>
</dbReference>
<dbReference type="GO" id="GO:0005198">
    <property type="term" value="F:structural molecule activity"/>
    <property type="evidence" value="ECO:0007669"/>
    <property type="project" value="InterPro"/>
</dbReference>
<dbReference type="GO" id="GO:0071973">
    <property type="term" value="P:bacterial-type flagellum-dependent cell motility"/>
    <property type="evidence" value="ECO:0007669"/>
    <property type="project" value="InterPro"/>
</dbReference>
<dbReference type="HAMAP" id="MF_00724">
    <property type="entry name" value="FliE"/>
    <property type="match status" value="1"/>
</dbReference>
<dbReference type="InterPro" id="IPR001624">
    <property type="entry name" value="FliE"/>
</dbReference>
<dbReference type="NCBIfam" id="TIGR00205">
    <property type="entry name" value="fliE"/>
    <property type="match status" value="1"/>
</dbReference>
<dbReference type="PANTHER" id="PTHR34653">
    <property type="match status" value="1"/>
</dbReference>
<dbReference type="PANTHER" id="PTHR34653:SF1">
    <property type="entry name" value="FLAGELLAR HOOK-BASAL BODY COMPLEX PROTEIN FLIE"/>
    <property type="match status" value="1"/>
</dbReference>
<dbReference type="Pfam" id="PF02049">
    <property type="entry name" value="FliE"/>
    <property type="match status" value="1"/>
</dbReference>
<dbReference type="PRINTS" id="PR01006">
    <property type="entry name" value="FLGHOOKFLIE"/>
</dbReference>
<keyword id="KW-0975">Bacterial flagellum</keyword>
<gene>
    <name evidence="1" type="primary">fliE</name>
    <name type="ordered locus">HPP12_1549</name>
</gene>
<evidence type="ECO:0000255" key="1">
    <source>
        <dbReference type="HAMAP-Rule" id="MF_00724"/>
    </source>
</evidence>
<evidence type="ECO:0000256" key="2">
    <source>
        <dbReference type="SAM" id="MobiDB-lite"/>
    </source>
</evidence>
<feature type="chain" id="PRO_1000132661" description="Flagellar hook-basal body complex protein FliE">
    <location>
        <begin position="1"/>
        <end position="109"/>
    </location>
</feature>
<feature type="region of interest" description="Disordered" evidence="2">
    <location>
        <begin position="1"/>
        <end position="38"/>
    </location>
</feature>
<feature type="compositionally biased region" description="Basic and acidic residues" evidence="2">
    <location>
        <begin position="19"/>
        <end position="38"/>
    </location>
</feature>
<organism>
    <name type="scientific">Helicobacter pylori (strain P12)</name>
    <dbReference type="NCBI Taxonomy" id="570508"/>
    <lineage>
        <taxon>Bacteria</taxon>
        <taxon>Pseudomonadati</taxon>
        <taxon>Campylobacterota</taxon>
        <taxon>Epsilonproteobacteria</taxon>
        <taxon>Campylobacterales</taxon>
        <taxon>Helicobacteraceae</taxon>
        <taxon>Helicobacter</taxon>
    </lineage>
</organism>
<accession>B6JP67</accession>
<reference key="1">
    <citation type="submission" date="2008-10" db="EMBL/GenBank/DDBJ databases">
        <title>The complete genome sequence of Helicobacter pylori strain P12.</title>
        <authorList>
            <person name="Fischer W."/>
            <person name="Windhager L."/>
            <person name="Karnholz A."/>
            <person name="Zeiller M."/>
            <person name="Zimmer R."/>
            <person name="Haas R."/>
        </authorList>
    </citation>
    <scope>NUCLEOTIDE SEQUENCE [LARGE SCALE GENOMIC DNA]</scope>
    <source>
        <strain>P12</strain>
    </source>
</reference>
<comment type="subcellular location">
    <subcellularLocation>
        <location evidence="1">Bacterial flagellum basal body</location>
    </subcellularLocation>
</comment>
<comment type="similarity">
    <text evidence="1">Belongs to the FliE family.</text>
</comment>
<protein>
    <recommendedName>
        <fullName evidence="1">Flagellar hook-basal body complex protein FliE</fullName>
    </recommendedName>
</protein>
<name>FLIE_HELP2</name>
<sequence>MQAIHNDKSLLSPFSELNTDNRTKREESGSTFKEQKGGEFSKLLKQSINELNNTQEQSDKALADMATGQIKDLHQAAIAIGKAETSMKLMLEVRNKAISAYKELLRTQI</sequence>
<proteinExistence type="inferred from homology"/>